<name>TDCC_KLEP3</name>
<protein>
    <recommendedName>
        <fullName evidence="1">Threonine/serine transporter TdcC</fullName>
    </recommendedName>
    <alternativeName>
        <fullName evidence="1">H(+)/threonine-serine symporter</fullName>
    </alternativeName>
</protein>
<gene>
    <name evidence="1" type="primary">tdcC</name>
    <name type="ordered locus">KPK_2015</name>
</gene>
<dbReference type="EMBL" id="CP000964">
    <property type="protein sequence ID" value="ACI09643.1"/>
    <property type="molecule type" value="Genomic_DNA"/>
</dbReference>
<dbReference type="SMR" id="B5XVZ7"/>
<dbReference type="KEGG" id="kpe:KPK_2015"/>
<dbReference type="HOGENOM" id="CLU_052043_1_1_6"/>
<dbReference type="Proteomes" id="UP000001734">
    <property type="component" value="Chromosome"/>
</dbReference>
<dbReference type="GO" id="GO:0005886">
    <property type="term" value="C:plasma membrane"/>
    <property type="evidence" value="ECO:0007669"/>
    <property type="project" value="UniProtKB-SubCell"/>
</dbReference>
<dbReference type="GO" id="GO:0015194">
    <property type="term" value="F:L-serine transmembrane transporter activity"/>
    <property type="evidence" value="ECO:0007669"/>
    <property type="project" value="InterPro"/>
</dbReference>
<dbReference type="GO" id="GO:0015293">
    <property type="term" value="F:symporter activity"/>
    <property type="evidence" value="ECO:0007669"/>
    <property type="project" value="UniProtKB-UniRule"/>
</dbReference>
<dbReference type="GO" id="GO:0015565">
    <property type="term" value="F:threonine efflux transmembrane transporter activity"/>
    <property type="evidence" value="ECO:0007669"/>
    <property type="project" value="InterPro"/>
</dbReference>
<dbReference type="Gene3D" id="1.20.1740.10">
    <property type="entry name" value="Amino acid/polyamine transporter I"/>
    <property type="match status" value="1"/>
</dbReference>
<dbReference type="HAMAP" id="MF_01583">
    <property type="entry name" value="Thr_Ser_transp_TdcC"/>
    <property type="match status" value="1"/>
</dbReference>
<dbReference type="InterPro" id="IPR018227">
    <property type="entry name" value="Amino_acid_transport_2"/>
</dbReference>
<dbReference type="InterPro" id="IPR004694">
    <property type="entry name" value="Hydroxy_aa_transpt"/>
</dbReference>
<dbReference type="InterPro" id="IPR023726">
    <property type="entry name" value="Thr/Ser_transpt_TdcC"/>
</dbReference>
<dbReference type="NCBIfam" id="NF010152">
    <property type="entry name" value="PRK13629.1"/>
    <property type="match status" value="1"/>
</dbReference>
<dbReference type="NCBIfam" id="TIGR00814">
    <property type="entry name" value="stp"/>
    <property type="match status" value="1"/>
</dbReference>
<dbReference type="PANTHER" id="PTHR35334">
    <property type="entry name" value="SERINE TRANSPORTER"/>
    <property type="match status" value="1"/>
</dbReference>
<dbReference type="PANTHER" id="PTHR35334:SF1">
    <property type="entry name" value="THREONINE_SERINE TRANSPORTER TDCC"/>
    <property type="match status" value="1"/>
</dbReference>
<evidence type="ECO:0000255" key="1">
    <source>
        <dbReference type="HAMAP-Rule" id="MF_01583"/>
    </source>
</evidence>
<comment type="function">
    <text evidence="1">Involved in the import of threonine and serine into the cell, with the concomitant import of a proton (symport system).</text>
</comment>
<comment type="catalytic activity">
    <reaction evidence="1">
        <text>L-threonine(in) + H(+)(in) = L-threonine(out) + H(+)(out)</text>
        <dbReference type="Rhea" id="RHEA:28883"/>
        <dbReference type="ChEBI" id="CHEBI:15378"/>
        <dbReference type="ChEBI" id="CHEBI:57926"/>
    </reaction>
    <physiologicalReaction direction="right-to-left" evidence="1">
        <dbReference type="Rhea" id="RHEA:28885"/>
    </physiologicalReaction>
</comment>
<comment type="catalytic activity">
    <reaction evidence="1">
        <text>L-serine(in) + H(+)(in) = L-serine(out) + H(+)(out)</text>
        <dbReference type="Rhea" id="RHEA:28887"/>
        <dbReference type="ChEBI" id="CHEBI:15378"/>
        <dbReference type="ChEBI" id="CHEBI:33384"/>
    </reaction>
    <physiologicalReaction direction="right-to-left" evidence="1">
        <dbReference type="Rhea" id="RHEA:28889"/>
    </physiologicalReaction>
</comment>
<comment type="subcellular location">
    <subcellularLocation>
        <location evidence="1">Cell inner membrane</location>
        <topology evidence="1">Multi-pass membrane protein</topology>
    </subcellularLocation>
</comment>
<comment type="similarity">
    <text evidence="1">Belongs to the amino acid/polyamine transporter 2 family. SdaC/TdcC subfamily.</text>
</comment>
<sequence length="443" mass="48782">MSTTESIASSQTSLSSWRKSDTTWTLGLFGTAIGAGVLFFPIRAGFGGLIPILVMLVLAYPIAFYCHRALARLCLSGANPSGNITETVEEHFGKTGGVVITFLYFFAICPLLWIYGVTITNTFMTFWENQLQMPALNRGVVALLLLLLMAFVIWFGKDLMVKVMSYLVWPFIASLVVISLSLIPYWNSAVIDQVNLSDIALTGHDGILVTVWLGISIMVFSFNFSPIVSSFVVSKREEYEAQFGREYTERKCSQIISRASMLMVAVVMFFAFSCLFTLSPQNMADAKAQNIPVLSYLANHFASMSGTKSTFATLLEYGASIIALVAIFKSFFGHYLGTLEGLNGLILRFGYKGDKTRVSSGKLNTLSMVFIMGSTWVVAYANPNILDLIEAMGAPIIASLLCLLPMYAIRKAPSLAKYRGRLDNLFVTAIGLLTILNIVYKLF</sequence>
<keyword id="KW-0029">Amino-acid transport</keyword>
<keyword id="KW-0997">Cell inner membrane</keyword>
<keyword id="KW-1003">Cell membrane</keyword>
<keyword id="KW-0472">Membrane</keyword>
<keyword id="KW-0769">Symport</keyword>
<keyword id="KW-0812">Transmembrane</keyword>
<keyword id="KW-1133">Transmembrane helix</keyword>
<keyword id="KW-0813">Transport</keyword>
<accession>B5XVZ7</accession>
<reference key="1">
    <citation type="journal article" date="2008" name="PLoS Genet.">
        <title>Complete genome sequence of the N2-fixing broad host range endophyte Klebsiella pneumoniae 342 and virulence predictions verified in mice.</title>
        <authorList>
            <person name="Fouts D.E."/>
            <person name="Tyler H.L."/>
            <person name="DeBoy R.T."/>
            <person name="Daugherty S."/>
            <person name="Ren Q."/>
            <person name="Badger J.H."/>
            <person name="Durkin A.S."/>
            <person name="Huot H."/>
            <person name="Shrivastava S."/>
            <person name="Kothari S."/>
            <person name="Dodson R.J."/>
            <person name="Mohamoud Y."/>
            <person name="Khouri H."/>
            <person name="Roesch L.F.W."/>
            <person name="Krogfelt K.A."/>
            <person name="Struve C."/>
            <person name="Triplett E.W."/>
            <person name="Methe B.A."/>
        </authorList>
    </citation>
    <scope>NUCLEOTIDE SEQUENCE [LARGE SCALE GENOMIC DNA]</scope>
    <source>
        <strain>342</strain>
    </source>
</reference>
<organism>
    <name type="scientific">Klebsiella pneumoniae (strain 342)</name>
    <dbReference type="NCBI Taxonomy" id="507522"/>
    <lineage>
        <taxon>Bacteria</taxon>
        <taxon>Pseudomonadati</taxon>
        <taxon>Pseudomonadota</taxon>
        <taxon>Gammaproteobacteria</taxon>
        <taxon>Enterobacterales</taxon>
        <taxon>Enterobacteriaceae</taxon>
        <taxon>Klebsiella/Raoultella group</taxon>
        <taxon>Klebsiella</taxon>
        <taxon>Klebsiella pneumoniae complex</taxon>
    </lineage>
</organism>
<proteinExistence type="inferred from homology"/>
<feature type="chain" id="PRO_1000147634" description="Threonine/serine transporter TdcC">
    <location>
        <begin position="1"/>
        <end position="443"/>
    </location>
</feature>
<feature type="transmembrane region" description="Helical" evidence="1">
    <location>
        <begin position="22"/>
        <end position="42"/>
    </location>
</feature>
<feature type="transmembrane region" description="Helical" evidence="1">
    <location>
        <begin position="44"/>
        <end position="64"/>
    </location>
</feature>
<feature type="transmembrane region" description="Helical" evidence="1">
    <location>
        <begin position="97"/>
        <end position="117"/>
    </location>
</feature>
<feature type="transmembrane region" description="Helical" evidence="1">
    <location>
        <begin position="140"/>
        <end position="160"/>
    </location>
</feature>
<feature type="transmembrane region" description="Helical" evidence="1">
    <location>
        <begin position="163"/>
        <end position="183"/>
    </location>
</feature>
<feature type="transmembrane region" description="Helical" evidence="1">
    <location>
        <begin position="207"/>
        <end position="227"/>
    </location>
</feature>
<feature type="transmembrane region" description="Helical" evidence="1">
    <location>
        <begin position="259"/>
        <end position="279"/>
    </location>
</feature>
<feature type="transmembrane region" description="Helical" evidence="1">
    <location>
        <begin position="319"/>
        <end position="339"/>
    </location>
</feature>
<feature type="transmembrane region" description="Helical" evidence="1">
    <location>
        <begin position="366"/>
        <end position="386"/>
    </location>
</feature>
<feature type="transmembrane region" description="Helical" evidence="1">
    <location>
        <begin position="389"/>
        <end position="409"/>
    </location>
</feature>
<feature type="transmembrane region" description="Helical" evidence="1">
    <location>
        <begin position="423"/>
        <end position="443"/>
    </location>
</feature>